<dbReference type="EMBL" id="Z86109">
    <property type="protein sequence ID" value="CAB06798.1"/>
    <property type="molecule type" value="Genomic_DNA"/>
</dbReference>
<dbReference type="OrthoDB" id="448250at2759"/>
<dbReference type="GO" id="GO:0005783">
    <property type="term" value="C:endoplasmic reticulum"/>
    <property type="evidence" value="ECO:0007669"/>
    <property type="project" value="GOC"/>
</dbReference>
<dbReference type="GO" id="GO:0000139">
    <property type="term" value="C:Golgi membrane"/>
    <property type="evidence" value="ECO:0007669"/>
    <property type="project" value="UniProtKB-SubCell"/>
</dbReference>
<dbReference type="GO" id="GO:0006621">
    <property type="term" value="P:protein retention in ER lumen"/>
    <property type="evidence" value="ECO:0007669"/>
    <property type="project" value="TreeGrafter"/>
</dbReference>
<dbReference type="GO" id="GO:0006890">
    <property type="term" value="P:retrograde vesicle-mediated transport, Golgi to endoplasmic reticulum"/>
    <property type="evidence" value="ECO:0007669"/>
    <property type="project" value="TreeGrafter"/>
</dbReference>
<dbReference type="InterPro" id="IPR004932">
    <property type="entry name" value="Rer1"/>
</dbReference>
<dbReference type="PANTHER" id="PTHR10743">
    <property type="entry name" value="PROTEIN RER1"/>
    <property type="match status" value="1"/>
</dbReference>
<dbReference type="PANTHER" id="PTHR10743:SF0">
    <property type="entry name" value="PROTEIN RER1"/>
    <property type="match status" value="1"/>
</dbReference>
<dbReference type="Pfam" id="PF03248">
    <property type="entry name" value="Rer1"/>
    <property type="match status" value="1"/>
</dbReference>
<dbReference type="PIRSF" id="PIRSF016013">
    <property type="entry name" value="AtER_Rer1p"/>
    <property type="match status" value="1"/>
</dbReference>
<keyword id="KW-0333">Golgi apparatus</keyword>
<keyword id="KW-0472">Membrane</keyword>
<keyword id="KW-0812">Transmembrane</keyword>
<keyword id="KW-1133">Transmembrane helix</keyword>
<proteinExistence type="inferred from homology"/>
<gene>
    <name type="primary">RER1</name>
</gene>
<feature type="chain" id="PRO_0000207592" description="Protein RER1">
    <location>
        <begin position="1"/>
        <end position="188"/>
    </location>
</feature>
<feature type="transmembrane region" description="Helical" evidence="2">
    <location>
        <begin position="43"/>
        <end position="59"/>
    </location>
</feature>
<feature type="transmembrane region" description="Helical" evidence="2">
    <location>
        <begin position="62"/>
        <end position="82"/>
    </location>
</feature>
<feature type="transmembrane region" description="Helical" evidence="2">
    <location>
        <begin position="139"/>
        <end position="161"/>
    </location>
</feature>
<comment type="function">
    <text evidence="1">Involved in the retrieval of endoplasmic reticulum membrane proteins from the early Golgi compartment. Required for correct localization of SEC12, SEC71 and SEC63 in the endoplasmic reticulum (By similarity).</text>
</comment>
<comment type="subcellular location">
    <subcellularLocation>
        <location>Golgi apparatus membrane</location>
        <topology>Multi-pass membrane protein</topology>
    </subcellularLocation>
</comment>
<comment type="similarity">
    <text evidence="3">Belongs to the RER1 family.</text>
</comment>
<sequence>MDYDSPDPMNGASSNALIAKMNSAKLLYQHYLDKVTPHAKQRWAVLGGLLCLFMVRITMAEGWYVICYGLGLFLLNQFLAFLTPKFDMSLQQDEENNELEAGEKSEEFRPFIRRLPEFKFWYNSIRATVISLVLSLFSIFDIPVFWPILLMYFVLLFFLTMRRQIQHMMKYRYIPLDIGKKKYSHPSN</sequence>
<reference key="1">
    <citation type="submission" date="1997-02" db="EMBL/GenBank/DDBJ databases">
        <authorList>
            <person name="Andersen T."/>
            <person name="Nilsson-Tillgren T."/>
        </authorList>
    </citation>
    <scope>NUCLEOTIDE SEQUENCE [GENOMIC DNA]</scope>
</reference>
<accession>P79003</accession>
<protein>
    <recommendedName>
        <fullName>Protein RER1</fullName>
    </recommendedName>
    <alternativeName>
        <fullName>Retention of ER proteins 1</fullName>
    </alternativeName>
</protein>
<name>RER1_SACPS</name>
<evidence type="ECO:0000250" key="1"/>
<evidence type="ECO:0000255" key="2"/>
<evidence type="ECO:0000305" key="3"/>
<organism>
    <name type="scientific">Saccharomyces pastorianus</name>
    <name type="common">Lager yeast</name>
    <name type="synonym">Saccharomyces cerevisiae x Saccharomyces eubayanus</name>
    <dbReference type="NCBI Taxonomy" id="27292"/>
    <lineage>
        <taxon>Eukaryota</taxon>
        <taxon>Fungi</taxon>
        <taxon>Dikarya</taxon>
        <taxon>Ascomycota</taxon>
        <taxon>Saccharomycotina</taxon>
        <taxon>Saccharomycetes</taxon>
        <taxon>Saccharomycetales</taxon>
        <taxon>Saccharomycetaceae</taxon>
        <taxon>Saccharomyces</taxon>
    </lineage>
</organism>